<sequence>MKMWFRLATFVTLIIEFAHCQLGAGLTSALTGNTGNAAHAGNSGNMATSMAMAAAMGSDFAALGPLGAKLFSGAGMSPAVAYKMFDGSVADFQKYKAKMNLMKRLNAGGSGGIAGGGGGGATGGLGALAMGKLALFTGGGMDPVVAYKMFDGSVSDFQKYKMKKKLAAAAGAGGGMGIGTLAMMDGSMADMAKFNMLSKVLSPPTGSQTGAAANGTSAGAAVRGGSSPLRRIANMRMTRKLCEDTPVVYRMRRCSPQLPCRHALTTCKQTLRYGSVCCAKNLYAAAMFENMPGF</sequence>
<feature type="signal peptide" evidence="1">
    <location>
        <begin position="1"/>
        <end position="20"/>
    </location>
</feature>
<feature type="chain" id="PRO_0000412716" description="Glycine-rich protein 2" evidence="1">
    <location>
        <begin position="21"/>
        <end position="294"/>
    </location>
</feature>
<feature type="region of interest" description="Disordered" evidence="2">
    <location>
        <begin position="205"/>
        <end position="225"/>
    </location>
</feature>
<feature type="compositionally biased region" description="Low complexity" evidence="2">
    <location>
        <begin position="205"/>
        <end position="221"/>
    </location>
</feature>
<feature type="sequence conflict" description="In Ref. 1; GT277939." evidence="5" ref="1">
    <original>G</original>
    <variation>A</variation>
    <location>
        <position position="23"/>
    </location>
</feature>
<feature type="sequence conflict" description="In Ref. 1; GT277939." evidence="5" ref="1">
    <original>T</original>
    <variation>F</variation>
    <location>
        <position position="34"/>
    </location>
</feature>
<feature type="sequence conflict" description="In Ref. 1; GT278464/GT284148/GT279323/GT284326/GT280703/GT278267." evidence="5" ref="1">
    <original>G</original>
    <variation>R</variation>
    <location>
        <position position="108"/>
    </location>
</feature>
<feature type="sequence conflict" description="In Ref. 1; GT278464." evidence="5" ref="1">
    <original>A</original>
    <variation>P</variation>
    <location>
        <position position="146"/>
    </location>
</feature>
<feature type="sequence conflict" description="In Ref. 1; GT284148." evidence="5" ref="1">
    <original>D</original>
    <variation>Y</variation>
    <location>
        <position position="151"/>
    </location>
</feature>
<feature type="sequence conflict" description="In Ref. 1; GT277832." evidence="5" ref="1">
    <original>KM</original>
    <variation>LL</variation>
    <location>
        <begin position="161"/>
        <end position="162"/>
    </location>
</feature>
<feature type="sequence conflict" description="In Ref. 1; GT278267." evidence="5" ref="1">
    <original>A</original>
    <variation>S</variation>
    <location>
        <position position="167"/>
    </location>
</feature>
<feature type="sequence conflict" description="In Ref. 1; GT277832." evidence="5" ref="1">
    <original>GA</original>
    <variation>VV</variation>
    <location>
        <begin position="171"/>
        <end position="172"/>
    </location>
</feature>
<feature type="sequence conflict" description="In Ref. 1; GT278267." evidence="5" ref="1">
    <original>A</original>
    <variation>P</variation>
    <location>
        <position position="182"/>
    </location>
</feature>
<feature type="sequence conflict" description="In Ref. 1; GT280703/GT281315." evidence="5" ref="1">
    <original>R</original>
    <variation>K</variation>
    <location>
        <position position="230"/>
    </location>
</feature>
<keyword id="KW-0903">Direct protein sequencing</keyword>
<keyword id="KW-0964">Secreted</keyword>
<keyword id="KW-0732">Signal</keyword>
<reference evidence="5" key="1">
    <citation type="journal article" date="2010" name="Mol. Biol. Evol.">
        <title>Parallel evolution of nacre building gene sets in molluscs.</title>
        <authorList>
            <person name="Jackson D.J."/>
            <person name="McDougall C."/>
            <person name="Woodcroft B."/>
            <person name="Moase P."/>
            <person name="Rose R.A."/>
            <person name="Kube M."/>
            <person name="Reinhardt R."/>
            <person name="Rokhsar D.S."/>
            <person name="Montagnani C."/>
            <person name="Joubert C."/>
            <person name="Piquemal D."/>
            <person name="Degnan B.M."/>
        </authorList>
    </citation>
    <scope>NUCLEOTIDE SEQUENCE [MRNA]</scope>
    <scope>IDENTIFICATION</scope>
    <source>
        <tissue evidence="3">Mantle</tissue>
    </source>
</reference>
<reference key="2">
    <citation type="journal article" date="2012" name="Proc. Natl. Acad. Sci. U.S.A.">
        <title>Different secretory repertoires control the biomineralization processes of prism and nacre deposition of the pearl oyster shell.</title>
        <authorList>
            <person name="Marie B."/>
            <person name="Joubert C."/>
            <person name="Tayale A."/>
            <person name="Zanella-Cleon I."/>
            <person name="Belliard C."/>
            <person name="Piquemal D."/>
            <person name="Cochennec-Laureau N."/>
            <person name="Marin F."/>
            <person name="Gueguen Y."/>
            <person name="Montagnani C."/>
        </authorList>
    </citation>
    <scope>PROTEIN SEQUENCE OF 84-94; 133-153 AND 273-280</scope>
    <scope>SUBCELLULAR LOCATION</scope>
    <scope>TISSUE SPECIFICITY</scope>
    <source>
        <tissue>Shell</tissue>
    </source>
</reference>
<accession>P86969</accession>
<name>GRP2_PINMA</name>
<proteinExistence type="evidence at protein level"/>
<organism>
    <name type="scientific">Pinctada maxima</name>
    <name type="common">Silver-lipped pearl oyster</name>
    <name type="synonym">White-lipped pearl oyster</name>
    <dbReference type="NCBI Taxonomy" id="104660"/>
    <lineage>
        <taxon>Eukaryota</taxon>
        <taxon>Metazoa</taxon>
        <taxon>Spiralia</taxon>
        <taxon>Lophotrochozoa</taxon>
        <taxon>Mollusca</taxon>
        <taxon>Bivalvia</taxon>
        <taxon>Autobranchia</taxon>
        <taxon>Pteriomorphia</taxon>
        <taxon>Pterioida</taxon>
        <taxon>Pterioidea</taxon>
        <taxon>Pteriidae</taxon>
        <taxon>Pinctada</taxon>
    </lineage>
</organism>
<dbReference type="EMBL" id="GT277832">
    <property type="status" value="NOT_ANNOTATED_CDS"/>
    <property type="molecule type" value="mRNA"/>
</dbReference>
<dbReference type="EMBL" id="GT277939">
    <property type="status" value="NOT_ANNOTATED_CDS"/>
    <property type="molecule type" value="mRNA"/>
</dbReference>
<dbReference type="EMBL" id="GT278267">
    <property type="status" value="NOT_ANNOTATED_CDS"/>
    <property type="molecule type" value="mRNA"/>
</dbReference>
<dbReference type="EMBL" id="GT278413">
    <property type="status" value="NOT_ANNOTATED_CDS"/>
    <property type="molecule type" value="mRNA"/>
</dbReference>
<dbReference type="EMBL" id="GT278416">
    <property type="status" value="NOT_ANNOTATED_CDS"/>
    <property type="molecule type" value="mRNA"/>
</dbReference>
<dbReference type="EMBL" id="GT278464">
    <property type="status" value="NOT_ANNOTATED_CDS"/>
    <property type="molecule type" value="mRNA"/>
</dbReference>
<dbReference type="EMBL" id="GT279323">
    <property type="status" value="NOT_ANNOTATED_CDS"/>
    <property type="molecule type" value="mRNA"/>
</dbReference>
<dbReference type="EMBL" id="GT279413">
    <property type="status" value="NOT_ANNOTATED_CDS"/>
    <property type="molecule type" value="mRNA"/>
</dbReference>
<dbReference type="EMBL" id="GT279459">
    <property type="status" value="NOT_ANNOTATED_CDS"/>
    <property type="molecule type" value="mRNA"/>
</dbReference>
<dbReference type="EMBL" id="GT280703">
    <property type="status" value="NOT_ANNOTATED_CDS"/>
    <property type="molecule type" value="mRNA"/>
</dbReference>
<dbReference type="EMBL" id="GT281122">
    <property type="status" value="NOT_ANNOTATED_CDS"/>
    <property type="molecule type" value="mRNA"/>
</dbReference>
<dbReference type="EMBL" id="GT281315">
    <property type="status" value="NOT_ANNOTATED_CDS"/>
    <property type="molecule type" value="mRNA"/>
</dbReference>
<dbReference type="EMBL" id="GT281945">
    <property type="status" value="NOT_ANNOTATED_CDS"/>
    <property type="molecule type" value="mRNA"/>
</dbReference>
<dbReference type="EMBL" id="GT282886">
    <property type="status" value="NOT_ANNOTATED_CDS"/>
    <property type="molecule type" value="mRNA"/>
</dbReference>
<dbReference type="EMBL" id="GT282974">
    <property type="status" value="NOT_ANNOTATED_CDS"/>
    <property type="molecule type" value="mRNA"/>
</dbReference>
<dbReference type="EMBL" id="GT284148">
    <property type="status" value="NOT_ANNOTATED_CDS"/>
    <property type="molecule type" value="mRNA"/>
</dbReference>
<dbReference type="EMBL" id="GT284326">
    <property type="status" value="NOT_ANNOTATED_CDS"/>
    <property type="molecule type" value="mRNA"/>
</dbReference>
<dbReference type="EMBL" id="GT284381">
    <property type="status" value="NOT_ANNOTATED_CDS"/>
    <property type="molecule type" value="mRNA"/>
</dbReference>
<dbReference type="EMBL" id="EZ420153">
    <property type="status" value="NOT_ANNOTATED_CDS"/>
    <property type="molecule type" value="mRNA"/>
</dbReference>
<dbReference type="SMR" id="P86969"/>
<dbReference type="GO" id="GO:0005576">
    <property type="term" value="C:extracellular region"/>
    <property type="evidence" value="ECO:0007669"/>
    <property type="project" value="UniProtKB-SubCell"/>
</dbReference>
<comment type="subcellular location">
    <subcellularLocation>
        <location evidence="4">Secreted</location>
    </subcellularLocation>
</comment>
<comment type="tissue specificity">
    <text evidence="4">Nacreous layer of shell (at protein level). Expressed primarily in the mantle with highest level in the mantle pallium and lower level in the mantle edge.</text>
</comment>
<comment type="sequence caution" evidence="5">
    <conflict type="miscellaneous discrepancy">
        <sequence resource="EMBL" id="GT277832"/>
    </conflict>
    <text>Premature stop codon at position 283.</text>
</comment>
<comment type="sequence caution" evidence="5">
    <conflict type="miscellaneous discrepancy">
        <sequence resource="EMBL" id="GT277939"/>
    </conflict>
    <text>Premature stop codon at position 35.</text>
</comment>
<comment type="sequence caution" evidence="5">
    <conflict type="frameshift">
        <sequence resource="EMBL" id="GT278267"/>
    </conflict>
</comment>
<comment type="sequence caution" evidence="5">
    <conflict type="frameshift">
        <sequence resource="EMBL" id="GT279323"/>
    </conflict>
</comment>
<comment type="sequence caution" evidence="5">
    <conflict type="frameshift">
        <sequence resource="EMBL" id="GT282974"/>
    </conflict>
</comment>
<comment type="sequence caution" evidence="5">
    <conflict type="frameshift">
        <sequence resource="EMBL" id="GT284326"/>
    </conflict>
</comment>
<evidence type="ECO:0000255" key="1"/>
<evidence type="ECO:0000256" key="2">
    <source>
        <dbReference type="SAM" id="MobiDB-lite"/>
    </source>
</evidence>
<evidence type="ECO:0000269" key="3">
    <source>
    </source>
</evidence>
<evidence type="ECO:0000269" key="4">
    <source>
    </source>
</evidence>
<evidence type="ECO:0000305" key="5"/>
<protein>
    <recommendedName>
        <fullName>Glycine-rich protein 2</fullName>
    </recommendedName>
    <alternativeName>
        <fullName>Nacre uncharacterized shell protein 6</fullName>
        <shortName>NUSP6</shortName>
    </alternativeName>
</protein>